<reference key="1">
    <citation type="journal article" date="2002" name="Genome Res.">
        <title>The genome of Methanosarcina acetivorans reveals extensive metabolic and physiological diversity.</title>
        <authorList>
            <person name="Galagan J.E."/>
            <person name="Nusbaum C."/>
            <person name="Roy A."/>
            <person name="Endrizzi M.G."/>
            <person name="Macdonald P."/>
            <person name="FitzHugh W."/>
            <person name="Calvo S."/>
            <person name="Engels R."/>
            <person name="Smirnov S."/>
            <person name="Atnoor D."/>
            <person name="Brown A."/>
            <person name="Allen N."/>
            <person name="Naylor J."/>
            <person name="Stange-Thomann N."/>
            <person name="DeArellano K."/>
            <person name="Johnson R."/>
            <person name="Linton L."/>
            <person name="McEwan P."/>
            <person name="McKernan K."/>
            <person name="Talamas J."/>
            <person name="Tirrell A."/>
            <person name="Ye W."/>
            <person name="Zimmer A."/>
            <person name="Barber R.D."/>
            <person name="Cann I."/>
            <person name="Graham D.E."/>
            <person name="Grahame D.A."/>
            <person name="Guss A.M."/>
            <person name="Hedderich R."/>
            <person name="Ingram-Smith C."/>
            <person name="Kuettner H.C."/>
            <person name="Krzycki J.A."/>
            <person name="Leigh J.A."/>
            <person name="Li W."/>
            <person name="Liu J."/>
            <person name="Mukhopadhyay B."/>
            <person name="Reeve J.N."/>
            <person name="Smith K."/>
            <person name="Springer T.A."/>
            <person name="Umayam L.A."/>
            <person name="White O."/>
            <person name="White R.H."/>
            <person name="de Macario E.C."/>
            <person name="Ferry J.G."/>
            <person name="Jarrell K.F."/>
            <person name="Jing H."/>
            <person name="Macario A.J.L."/>
            <person name="Paulsen I.T."/>
            <person name="Pritchett M."/>
            <person name="Sowers K.R."/>
            <person name="Swanson R.V."/>
            <person name="Zinder S.H."/>
            <person name="Lander E."/>
            <person name="Metcalf W.W."/>
            <person name="Birren B."/>
        </authorList>
    </citation>
    <scope>NUCLEOTIDE SEQUENCE [LARGE SCALE GENOMIC DNA]</scope>
    <source>
        <strain>ATCC 35395 / DSM 2834 / JCM 12185 / C2A</strain>
    </source>
</reference>
<name>GFCR2_METAC</name>
<accession>P58863</accession>
<evidence type="ECO:0000255" key="1">
    <source>
        <dbReference type="HAMAP-Rule" id="MF_01214"/>
    </source>
</evidence>
<feature type="chain" id="PRO_0000110809" description="Transcriptional regulator GfcR 2">
    <location>
        <begin position="1"/>
        <end position="203"/>
    </location>
</feature>
<keyword id="KW-0238">DNA-binding</keyword>
<keyword id="KW-1185">Reference proteome</keyword>
<keyword id="KW-0804">Transcription</keyword>
<keyword id="KW-0805">Transcription regulation</keyword>
<organism>
    <name type="scientific">Methanosarcina acetivorans (strain ATCC 35395 / DSM 2834 / JCM 12185 / C2A)</name>
    <dbReference type="NCBI Taxonomy" id="188937"/>
    <lineage>
        <taxon>Archaea</taxon>
        <taxon>Methanobacteriati</taxon>
        <taxon>Methanobacteriota</taxon>
        <taxon>Stenosarchaea group</taxon>
        <taxon>Methanomicrobia</taxon>
        <taxon>Methanosarcinales</taxon>
        <taxon>Methanosarcinaceae</taxon>
        <taxon>Methanosarcina</taxon>
    </lineage>
</organism>
<comment type="domain">
    <text evidence="1">Contains an N-terminal DNA-binding winged helix-turn-helix domain and a C-terminal regulatory domain (or effector binding domain) resembling phosphoribosyltransferase (PRT) domain.</text>
</comment>
<comment type="similarity">
    <text evidence="1">Belongs to the purine/pyrimidine phosphoribosyltransferase family. GfcR subfamily.</text>
</comment>
<sequence length="203" mass="22130">MKDIEDLIEKAVELQSNGLISAQIADELNISRETVTWLLTRSKKEEATPAPKDISVDWSSIGKSAKRLHNISLALCDMVLETMEKVNAEVDVVVGIAANGVPLASMMAYELDADFAIYHRKGQGIVHAGHRGTISRNFGSVAGKNCIIVDDVITTGSTSMEVIEQLKEMDAKPRVVTVLVDKKGVDTIYNVPIQSLVRIARVD</sequence>
<protein>
    <recommendedName>
        <fullName evidence="1">Transcriptional regulator GfcR 2</fullName>
    </recommendedName>
</protein>
<proteinExistence type="inferred from homology"/>
<gene>
    <name evidence="1" type="primary">gfcR2</name>
    <name type="ordered locus">MA_2520</name>
</gene>
<dbReference type="EMBL" id="AE010299">
    <property type="protein sequence ID" value="AAM05903.1"/>
    <property type="molecule type" value="Genomic_DNA"/>
</dbReference>
<dbReference type="RefSeq" id="WP_011022488.1">
    <property type="nucleotide sequence ID" value="NC_003552.1"/>
</dbReference>
<dbReference type="SMR" id="P58863"/>
<dbReference type="FunCoup" id="P58863">
    <property type="interactions" value="94"/>
</dbReference>
<dbReference type="STRING" id="188937.MA_2520"/>
<dbReference type="EnsemblBacteria" id="AAM05903">
    <property type="protein sequence ID" value="AAM05903"/>
    <property type="gene ID" value="MA_2520"/>
</dbReference>
<dbReference type="GeneID" id="1474409"/>
<dbReference type="KEGG" id="mac:MA_2520"/>
<dbReference type="HOGENOM" id="CLU_111001_0_0_2"/>
<dbReference type="InParanoid" id="P58863"/>
<dbReference type="OrthoDB" id="68893at2157"/>
<dbReference type="PhylomeDB" id="P58863"/>
<dbReference type="Proteomes" id="UP000002487">
    <property type="component" value="Chromosome"/>
</dbReference>
<dbReference type="GO" id="GO:0003677">
    <property type="term" value="F:DNA binding"/>
    <property type="evidence" value="ECO:0007669"/>
    <property type="project" value="UniProtKB-UniRule"/>
</dbReference>
<dbReference type="GO" id="GO:0004588">
    <property type="term" value="F:orotate phosphoribosyltransferase activity"/>
    <property type="evidence" value="ECO:0000318"/>
    <property type="project" value="GO_Central"/>
</dbReference>
<dbReference type="GO" id="GO:0019856">
    <property type="term" value="P:pyrimidine nucleobase biosynthetic process"/>
    <property type="evidence" value="ECO:0000318"/>
    <property type="project" value="GO_Central"/>
</dbReference>
<dbReference type="GO" id="GO:0010468">
    <property type="term" value="P:regulation of gene expression"/>
    <property type="evidence" value="ECO:0007669"/>
    <property type="project" value="UniProtKB-UniRule"/>
</dbReference>
<dbReference type="GO" id="GO:0006222">
    <property type="term" value="P:UMP biosynthetic process"/>
    <property type="evidence" value="ECO:0000318"/>
    <property type="project" value="GO_Central"/>
</dbReference>
<dbReference type="CDD" id="cd06223">
    <property type="entry name" value="PRTases_typeI"/>
    <property type="match status" value="1"/>
</dbReference>
<dbReference type="Gene3D" id="3.40.50.2020">
    <property type="match status" value="1"/>
</dbReference>
<dbReference type="HAMAP" id="MF_01214">
    <property type="entry name" value="GfcR"/>
    <property type="match status" value="1"/>
</dbReference>
<dbReference type="InterPro" id="IPR022854">
    <property type="entry name" value="GfcR-like"/>
</dbReference>
<dbReference type="InterPro" id="IPR000836">
    <property type="entry name" value="PRibTrfase_dom"/>
</dbReference>
<dbReference type="InterPro" id="IPR029057">
    <property type="entry name" value="PRTase-like"/>
</dbReference>
<dbReference type="NCBIfam" id="NF002620">
    <property type="entry name" value="PRK02277.1"/>
    <property type="match status" value="1"/>
</dbReference>
<dbReference type="PANTHER" id="PTHR19278">
    <property type="entry name" value="OROTATE PHOSPHORIBOSYLTRANSFERASE"/>
    <property type="match status" value="1"/>
</dbReference>
<dbReference type="PANTHER" id="PTHR19278:SF41">
    <property type="entry name" value="PYRE-LIKE PROTEIN"/>
    <property type="match status" value="1"/>
</dbReference>
<dbReference type="Pfam" id="PF00156">
    <property type="entry name" value="Pribosyltran"/>
    <property type="match status" value="1"/>
</dbReference>
<dbReference type="SUPFAM" id="SSF53271">
    <property type="entry name" value="PRTase-like"/>
    <property type="match status" value="1"/>
</dbReference>
<dbReference type="PROSITE" id="PS00103">
    <property type="entry name" value="PUR_PYR_PR_TRANSFER"/>
    <property type="match status" value="1"/>
</dbReference>